<dbReference type="EC" id="2.7.1.71" evidence="1"/>
<dbReference type="EMBL" id="CP000469">
    <property type="protein sequence ID" value="ABK50112.1"/>
    <property type="molecule type" value="Genomic_DNA"/>
</dbReference>
<dbReference type="RefSeq" id="WP_011718623.1">
    <property type="nucleotide sequence ID" value="NC_008577.1"/>
</dbReference>
<dbReference type="SMR" id="A0L243"/>
<dbReference type="STRING" id="94122.Shewana3_3894"/>
<dbReference type="GeneID" id="94729802"/>
<dbReference type="KEGG" id="shn:Shewana3_3894"/>
<dbReference type="eggNOG" id="COG0703">
    <property type="taxonomic scope" value="Bacteria"/>
</dbReference>
<dbReference type="HOGENOM" id="CLU_057607_2_2_6"/>
<dbReference type="OrthoDB" id="9800332at2"/>
<dbReference type="UniPathway" id="UPA00053">
    <property type="reaction ID" value="UER00088"/>
</dbReference>
<dbReference type="Proteomes" id="UP000002589">
    <property type="component" value="Chromosome"/>
</dbReference>
<dbReference type="GO" id="GO:0005829">
    <property type="term" value="C:cytosol"/>
    <property type="evidence" value="ECO:0007669"/>
    <property type="project" value="TreeGrafter"/>
</dbReference>
<dbReference type="GO" id="GO:0005524">
    <property type="term" value="F:ATP binding"/>
    <property type="evidence" value="ECO:0007669"/>
    <property type="project" value="UniProtKB-UniRule"/>
</dbReference>
<dbReference type="GO" id="GO:0000287">
    <property type="term" value="F:magnesium ion binding"/>
    <property type="evidence" value="ECO:0007669"/>
    <property type="project" value="UniProtKB-UniRule"/>
</dbReference>
<dbReference type="GO" id="GO:0004765">
    <property type="term" value="F:shikimate kinase activity"/>
    <property type="evidence" value="ECO:0007669"/>
    <property type="project" value="UniProtKB-UniRule"/>
</dbReference>
<dbReference type="GO" id="GO:0008652">
    <property type="term" value="P:amino acid biosynthetic process"/>
    <property type="evidence" value="ECO:0007669"/>
    <property type="project" value="UniProtKB-KW"/>
</dbReference>
<dbReference type="GO" id="GO:0009073">
    <property type="term" value="P:aromatic amino acid family biosynthetic process"/>
    <property type="evidence" value="ECO:0007669"/>
    <property type="project" value="UniProtKB-KW"/>
</dbReference>
<dbReference type="GO" id="GO:0009423">
    <property type="term" value="P:chorismate biosynthetic process"/>
    <property type="evidence" value="ECO:0007669"/>
    <property type="project" value="UniProtKB-UniRule"/>
</dbReference>
<dbReference type="CDD" id="cd00464">
    <property type="entry name" value="SK"/>
    <property type="match status" value="1"/>
</dbReference>
<dbReference type="FunFam" id="3.40.50.300:FF:000099">
    <property type="entry name" value="Shikimate kinase 1"/>
    <property type="match status" value="1"/>
</dbReference>
<dbReference type="Gene3D" id="3.40.50.300">
    <property type="entry name" value="P-loop containing nucleotide triphosphate hydrolases"/>
    <property type="match status" value="1"/>
</dbReference>
<dbReference type="HAMAP" id="MF_00109">
    <property type="entry name" value="Shikimate_kinase"/>
    <property type="match status" value="1"/>
</dbReference>
<dbReference type="InterPro" id="IPR027417">
    <property type="entry name" value="P-loop_NTPase"/>
</dbReference>
<dbReference type="InterPro" id="IPR031322">
    <property type="entry name" value="Shikimate/glucono_kinase"/>
</dbReference>
<dbReference type="InterPro" id="IPR000623">
    <property type="entry name" value="Shikimate_kinase/TSH1"/>
</dbReference>
<dbReference type="InterPro" id="IPR023000">
    <property type="entry name" value="Shikimate_kinase_CS"/>
</dbReference>
<dbReference type="NCBIfam" id="NF003456">
    <property type="entry name" value="PRK05057.1"/>
    <property type="match status" value="1"/>
</dbReference>
<dbReference type="PANTHER" id="PTHR21087">
    <property type="entry name" value="SHIKIMATE KINASE"/>
    <property type="match status" value="1"/>
</dbReference>
<dbReference type="PANTHER" id="PTHR21087:SF16">
    <property type="entry name" value="SHIKIMATE KINASE 1, CHLOROPLASTIC"/>
    <property type="match status" value="1"/>
</dbReference>
<dbReference type="Pfam" id="PF01202">
    <property type="entry name" value="SKI"/>
    <property type="match status" value="1"/>
</dbReference>
<dbReference type="PRINTS" id="PR01100">
    <property type="entry name" value="SHIKIMTKNASE"/>
</dbReference>
<dbReference type="SUPFAM" id="SSF52540">
    <property type="entry name" value="P-loop containing nucleoside triphosphate hydrolases"/>
    <property type="match status" value="1"/>
</dbReference>
<dbReference type="PROSITE" id="PS01128">
    <property type="entry name" value="SHIKIMATE_KINASE"/>
    <property type="match status" value="1"/>
</dbReference>
<keyword id="KW-0028">Amino-acid biosynthesis</keyword>
<keyword id="KW-0057">Aromatic amino acid biosynthesis</keyword>
<keyword id="KW-0067">ATP-binding</keyword>
<keyword id="KW-0963">Cytoplasm</keyword>
<keyword id="KW-0418">Kinase</keyword>
<keyword id="KW-0460">Magnesium</keyword>
<keyword id="KW-0479">Metal-binding</keyword>
<keyword id="KW-0547">Nucleotide-binding</keyword>
<keyword id="KW-0808">Transferase</keyword>
<reference key="1">
    <citation type="submission" date="2006-09" db="EMBL/GenBank/DDBJ databases">
        <title>Complete sequence of chromosome 1 of Shewanella sp. ANA-3.</title>
        <authorList>
            <person name="Copeland A."/>
            <person name="Lucas S."/>
            <person name="Lapidus A."/>
            <person name="Barry K."/>
            <person name="Detter J.C."/>
            <person name="Glavina del Rio T."/>
            <person name="Hammon N."/>
            <person name="Israni S."/>
            <person name="Dalin E."/>
            <person name="Tice H."/>
            <person name="Pitluck S."/>
            <person name="Chertkov O."/>
            <person name="Brettin T."/>
            <person name="Bruce D."/>
            <person name="Han C."/>
            <person name="Tapia R."/>
            <person name="Gilna P."/>
            <person name="Schmutz J."/>
            <person name="Larimer F."/>
            <person name="Land M."/>
            <person name="Hauser L."/>
            <person name="Kyrpides N."/>
            <person name="Kim E."/>
            <person name="Newman D."/>
            <person name="Salticov C."/>
            <person name="Konstantinidis K."/>
            <person name="Klappenback J."/>
            <person name="Tiedje J."/>
            <person name="Richardson P."/>
        </authorList>
    </citation>
    <scope>NUCLEOTIDE SEQUENCE [LARGE SCALE GENOMIC DNA]</scope>
    <source>
        <strain>ANA-3</strain>
    </source>
</reference>
<comment type="function">
    <text evidence="1">Catalyzes the specific phosphorylation of the 3-hydroxyl group of shikimic acid using ATP as a cosubstrate.</text>
</comment>
<comment type="catalytic activity">
    <reaction evidence="1">
        <text>shikimate + ATP = 3-phosphoshikimate + ADP + H(+)</text>
        <dbReference type="Rhea" id="RHEA:13121"/>
        <dbReference type="ChEBI" id="CHEBI:15378"/>
        <dbReference type="ChEBI" id="CHEBI:30616"/>
        <dbReference type="ChEBI" id="CHEBI:36208"/>
        <dbReference type="ChEBI" id="CHEBI:145989"/>
        <dbReference type="ChEBI" id="CHEBI:456216"/>
        <dbReference type="EC" id="2.7.1.71"/>
    </reaction>
</comment>
<comment type="cofactor">
    <cofactor evidence="1">
        <name>Mg(2+)</name>
        <dbReference type="ChEBI" id="CHEBI:18420"/>
    </cofactor>
    <text evidence="1">Binds 1 Mg(2+) ion per subunit.</text>
</comment>
<comment type="pathway">
    <text evidence="1">Metabolic intermediate biosynthesis; chorismate biosynthesis; chorismate from D-erythrose 4-phosphate and phosphoenolpyruvate: step 5/7.</text>
</comment>
<comment type="subunit">
    <text evidence="1">Monomer.</text>
</comment>
<comment type="subcellular location">
    <subcellularLocation>
        <location evidence="1">Cytoplasm</location>
    </subcellularLocation>
</comment>
<comment type="similarity">
    <text evidence="1">Belongs to the shikimate kinase family.</text>
</comment>
<protein>
    <recommendedName>
        <fullName evidence="1">Shikimate kinase</fullName>
        <shortName evidence="1">SK</shortName>
        <ecNumber evidence="1">2.7.1.71</ecNumber>
    </recommendedName>
</protein>
<name>AROK_SHESA</name>
<organism>
    <name type="scientific">Shewanella sp. (strain ANA-3)</name>
    <dbReference type="NCBI Taxonomy" id="94122"/>
    <lineage>
        <taxon>Bacteria</taxon>
        <taxon>Pseudomonadati</taxon>
        <taxon>Pseudomonadota</taxon>
        <taxon>Gammaproteobacteria</taxon>
        <taxon>Alteromonadales</taxon>
        <taxon>Shewanellaceae</taxon>
        <taxon>Shewanella</taxon>
    </lineage>
</organism>
<accession>A0L243</accession>
<feature type="chain" id="PRO_1000022999" description="Shikimate kinase">
    <location>
        <begin position="1"/>
        <end position="171"/>
    </location>
</feature>
<feature type="binding site" evidence="1">
    <location>
        <begin position="14"/>
        <end position="19"/>
    </location>
    <ligand>
        <name>ATP</name>
        <dbReference type="ChEBI" id="CHEBI:30616"/>
    </ligand>
</feature>
<feature type="binding site" evidence="1">
    <location>
        <position position="18"/>
    </location>
    <ligand>
        <name>Mg(2+)</name>
        <dbReference type="ChEBI" id="CHEBI:18420"/>
    </ligand>
</feature>
<feature type="binding site" evidence="1">
    <location>
        <position position="36"/>
    </location>
    <ligand>
        <name>substrate</name>
    </ligand>
</feature>
<feature type="binding site" evidence="1">
    <location>
        <position position="60"/>
    </location>
    <ligand>
        <name>substrate</name>
    </ligand>
</feature>
<feature type="binding site" evidence="1">
    <location>
        <position position="82"/>
    </location>
    <ligand>
        <name>substrate</name>
    </ligand>
</feature>
<feature type="binding site" evidence="1">
    <location>
        <position position="120"/>
    </location>
    <ligand>
        <name>ATP</name>
        <dbReference type="ChEBI" id="CHEBI:30616"/>
    </ligand>
</feature>
<feature type="binding site" evidence="1">
    <location>
        <position position="139"/>
    </location>
    <ligand>
        <name>substrate</name>
    </ligand>
</feature>
<feature type="binding site" evidence="1">
    <location>
        <position position="156"/>
    </location>
    <ligand>
        <name>ATP</name>
        <dbReference type="ChEBI" id="CHEBI:30616"/>
    </ligand>
</feature>
<gene>
    <name evidence="1" type="primary">aroK</name>
    <name type="ordered locus">Shewana3_3894</name>
</gene>
<proteinExistence type="inferred from homology"/>
<sequence length="171" mass="19189">MAEKRNIFLVGPMGAGKSTIGRHLAQMLHLEFHDSDQEIEQRTGADIAWVFDVEGEEGFRRREAQVIADLSEKQGIVLATGGGSVQSKDIRNHLSARGIVVYLETTIDKQVARTQRDKRRPLLQVDDPREVLENLAEIRNPLYEEIADVIVKTDDQSAKVVANQIIEQLGF</sequence>
<evidence type="ECO:0000255" key="1">
    <source>
        <dbReference type="HAMAP-Rule" id="MF_00109"/>
    </source>
</evidence>